<proteinExistence type="evidence at protein level"/>
<sequence length="258" mass="30095">MKDLKKIESYLDKLRIKEKDGEERKIYAEVLDGRTLKTLYKLSAKGYITAMGGVISTGKEANVFYADGVFDGKPVAMAVKIYRIETSEFDKMDEYLYGDERFDMRRISPKEKVFIWTEKEFRNLERAKEAGVSVPQPYTYMKNVLLMEFIGEDELPAPTLVELGRELKELDVEGIFNDVVENVKRLYQEAELVHADLSEYNIMYIDKVYFIDMGQAVTLRHPMAESYLERDVRNIIRFFSKYGVKADFEEMLKEVKGE</sequence>
<gene>
    <name type="primary">rio1</name>
    <name type="ordered locus">AF_1804</name>
</gene>
<protein>
    <recommendedName>
        <fullName>RIO-type serine/threonine-protein kinase Rio1</fullName>
        <shortName>AfRio1</shortName>
        <ecNumber>2.7.11.1</ecNumber>
    </recommendedName>
</protein>
<evidence type="ECO:0000250" key="1">
    <source>
        <dbReference type="UniProtKB" id="G0S3J5"/>
    </source>
</evidence>
<evidence type="ECO:0000250" key="2">
    <source>
        <dbReference type="UniProtKB" id="O30245"/>
    </source>
</evidence>
<evidence type="ECO:0000250" key="3">
    <source>
        <dbReference type="UniProtKB" id="Q9BRS2"/>
    </source>
</evidence>
<evidence type="ECO:0000255" key="4">
    <source>
        <dbReference type="PROSITE-ProRule" id="PRU00159"/>
    </source>
</evidence>
<evidence type="ECO:0000269" key="5">
    <source>
    </source>
</evidence>
<evidence type="ECO:0000305" key="6"/>
<evidence type="ECO:0000305" key="7">
    <source>
    </source>
</evidence>
<evidence type="ECO:0007744" key="8">
    <source>
        <dbReference type="PDB" id="1ZP9"/>
    </source>
</evidence>
<evidence type="ECO:0007829" key="9">
    <source>
        <dbReference type="PDB" id="1ZTF"/>
    </source>
</evidence>
<evidence type="ECO:0007829" key="10">
    <source>
        <dbReference type="PDB" id="1ZTH"/>
    </source>
</evidence>
<evidence type="ECO:0007829" key="11">
    <source>
        <dbReference type="PDB" id="3RE4"/>
    </source>
</evidence>
<accession>O28471</accession>
<reference key="1">
    <citation type="journal article" date="1997" name="Nature">
        <title>The complete genome sequence of the hyperthermophilic, sulphate-reducing archaeon Archaeoglobus fulgidus.</title>
        <authorList>
            <person name="Klenk H.-P."/>
            <person name="Clayton R.A."/>
            <person name="Tomb J.-F."/>
            <person name="White O."/>
            <person name="Nelson K.E."/>
            <person name="Ketchum K.A."/>
            <person name="Dodson R.J."/>
            <person name="Gwinn M.L."/>
            <person name="Hickey E.K."/>
            <person name="Peterson J.D."/>
            <person name="Richardson D.L."/>
            <person name="Kerlavage A.R."/>
            <person name="Graham D.E."/>
            <person name="Kyrpides N.C."/>
            <person name="Fleischmann R.D."/>
            <person name="Quackenbush J."/>
            <person name="Lee N.H."/>
            <person name="Sutton G.G."/>
            <person name="Gill S.R."/>
            <person name="Kirkness E.F."/>
            <person name="Dougherty B.A."/>
            <person name="McKenney K."/>
            <person name="Adams M.D."/>
            <person name="Loftus B.J."/>
            <person name="Peterson S.N."/>
            <person name="Reich C.I."/>
            <person name="McNeil L.K."/>
            <person name="Badger J.H."/>
            <person name="Glodek A."/>
            <person name="Zhou L."/>
            <person name="Overbeek R."/>
            <person name="Gocayne J.D."/>
            <person name="Weidman J.F."/>
            <person name="McDonald L.A."/>
            <person name="Utterback T.R."/>
            <person name="Cotton M.D."/>
            <person name="Spriggs T."/>
            <person name="Artiach P."/>
            <person name="Kaine B.P."/>
            <person name="Sykes S.M."/>
            <person name="Sadow P.W."/>
            <person name="D'Andrea K.P."/>
            <person name="Bowman C."/>
            <person name="Fujii C."/>
            <person name="Garland S.A."/>
            <person name="Mason T.M."/>
            <person name="Olsen G.J."/>
            <person name="Fraser C.M."/>
            <person name="Smith H.O."/>
            <person name="Woese C.R."/>
            <person name="Venter J.C."/>
        </authorList>
    </citation>
    <scope>NUCLEOTIDE SEQUENCE [LARGE SCALE GENOMIC DNA]</scope>
    <source>
        <strain>ATCC 49558 / DSM 4304 / JCM 9628 / NBRC 100126 / VC-16</strain>
    </source>
</reference>
<reference key="2">
    <citation type="journal article" date="2005" name="FEBS J.">
        <title>Structure and activity of the atypical serine kinase Rio1.</title>
        <authorList>
            <person name="Laronde-Leblanc N."/>
            <person name="Guszczynski T."/>
            <person name="Copeland T."/>
            <person name="Wlodawer A."/>
        </authorList>
    </citation>
    <scope>PROTEIN SEQUENCE OF 99-110</scope>
    <scope>X-RAY CRYSTALLOGRAPHY (1.89 ANGSTROMS) IN COMPLEX WITH ADP; ATP AND MANGANESE IONS</scope>
    <scope>FUNCTION</scope>
    <scope>PHOSPHORYLATION AT SER-108</scope>
    <scope>MUTAGENESIS OF SER-108 AND ASP-196</scope>
    <source>
        <strain>ATCC 49558 / DSM 4304 / JCM 9628 / NBRC 100126 / VC-16</strain>
    </source>
</reference>
<comment type="function">
    <text evidence="1 5">Autophosphorylation of the rio1 protein is not necessary for maintenance of kinase activity. Prefers ATP over GTP (PubMed:16008568). The yeast ortholog is involved in ribosome biogenesis. Despite the protein kinase domain is proposed to act predominantly as an ATPase (By similarity).</text>
</comment>
<comment type="catalytic activity">
    <reaction>
        <text>L-seryl-[protein] + ATP = O-phospho-L-seryl-[protein] + ADP + H(+)</text>
        <dbReference type="Rhea" id="RHEA:17989"/>
        <dbReference type="Rhea" id="RHEA-COMP:9863"/>
        <dbReference type="Rhea" id="RHEA-COMP:11604"/>
        <dbReference type="ChEBI" id="CHEBI:15378"/>
        <dbReference type="ChEBI" id="CHEBI:29999"/>
        <dbReference type="ChEBI" id="CHEBI:30616"/>
        <dbReference type="ChEBI" id="CHEBI:83421"/>
        <dbReference type="ChEBI" id="CHEBI:456216"/>
        <dbReference type="EC" id="2.7.11.1"/>
    </reaction>
</comment>
<comment type="catalytic activity">
    <reaction>
        <text>L-threonyl-[protein] + ATP = O-phospho-L-threonyl-[protein] + ADP + H(+)</text>
        <dbReference type="Rhea" id="RHEA:46608"/>
        <dbReference type="Rhea" id="RHEA-COMP:11060"/>
        <dbReference type="Rhea" id="RHEA-COMP:11605"/>
        <dbReference type="ChEBI" id="CHEBI:15378"/>
        <dbReference type="ChEBI" id="CHEBI:30013"/>
        <dbReference type="ChEBI" id="CHEBI:30616"/>
        <dbReference type="ChEBI" id="CHEBI:61977"/>
        <dbReference type="ChEBI" id="CHEBI:456216"/>
        <dbReference type="EC" id="2.7.11.1"/>
    </reaction>
</comment>
<comment type="cofactor">
    <cofactor evidence="7">
        <name>Mg(2+)</name>
        <dbReference type="ChEBI" id="CHEBI:18420"/>
    </cofactor>
</comment>
<comment type="similarity">
    <text evidence="6">Belongs to the protein kinase superfamily. RIO-type Ser/Thr kinase family.</text>
</comment>
<name>RIO1_ARCFU</name>
<feature type="chain" id="PRO_0000344796" description="RIO-type serine/threonine-protein kinase Rio1">
    <location>
        <begin position="1"/>
        <end position="258"/>
    </location>
</feature>
<feature type="domain" description="Protein kinase" evidence="4">
    <location>
        <begin position="49"/>
        <end position="258"/>
    </location>
</feature>
<feature type="active site" description="Proton acceptor" evidence="3 4">
    <location>
        <position position="196"/>
    </location>
</feature>
<feature type="active site" description="4-aspartylphosphate intermediate" evidence="3">
    <location>
        <position position="212"/>
    </location>
</feature>
<feature type="binding site" evidence="4">
    <location>
        <begin position="55"/>
        <end position="63"/>
    </location>
    <ligand>
        <name>ATP</name>
        <dbReference type="ChEBI" id="CHEBI:30616"/>
    </ligand>
</feature>
<feature type="binding site" evidence="4 5 8">
    <location>
        <position position="80"/>
    </location>
    <ligand>
        <name>ATP</name>
        <dbReference type="ChEBI" id="CHEBI:30616"/>
    </ligand>
</feature>
<feature type="binding site" evidence="5 8">
    <location>
        <position position="148"/>
    </location>
    <ligand>
        <name>ATP</name>
        <dbReference type="ChEBI" id="CHEBI:30616"/>
    </ligand>
</feature>
<feature type="binding site" evidence="5 8">
    <location>
        <position position="150"/>
    </location>
    <ligand>
        <name>ATP</name>
        <dbReference type="ChEBI" id="CHEBI:30616"/>
    </ligand>
</feature>
<feature type="binding site" evidence="2">
    <location>
        <position position="200"/>
    </location>
    <ligand>
        <name>ATP</name>
        <dbReference type="ChEBI" id="CHEBI:30616"/>
    </ligand>
</feature>
<feature type="binding site" evidence="5 8">
    <location>
        <position position="201"/>
    </location>
    <ligand>
        <name>ATP</name>
        <dbReference type="ChEBI" id="CHEBI:30616"/>
    </ligand>
</feature>
<feature type="binding site" evidence="7">
    <location>
        <position position="201"/>
    </location>
    <ligand>
        <name>Mg(2+)</name>
        <dbReference type="ChEBI" id="CHEBI:18420"/>
    </ligand>
</feature>
<feature type="binding site" evidence="5 8">
    <location>
        <position position="212"/>
    </location>
    <ligand>
        <name>ATP</name>
        <dbReference type="ChEBI" id="CHEBI:30616"/>
    </ligand>
</feature>
<feature type="binding site" evidence="7">
    <location>
        <position position="212"/>
    </location>
    <ligand>
        <name>Mg(2+)</name>
        <dbReference type="ChEBI" id="CHEBI:18420"/>
    </ligand>
</feature>
<feature type="modified residue" description="Phosphoserine; by autocatalysis" evidence="5">
    <location>
        <position position="108"/>
    </location>
</feature>
<feature type="mutagenesis site" description="Absence of autophosphorylation, retains kinase activity." evidence="5">
    <original>S</original>
    <variation>A</variation>
    <location>
        <position position="108"/>
    </location>
</feature>
<feature type="mutagenesis site" description="Drastically reduced kinase activity." evidence="5">
    <original>D</original>
    <variation>A</variation>
    <location>
        <position position="196"/>
    </location>
</feature>
<feature type="helix" evidence="10">
    <location>
        <begin position="4"/>
        <end position="13"/>
    </location>
</feature>
<feature type="helix" evidence="11">
    <location>
        <begin position="18"/>
        <end position="20"/>
    </location>
</feature>
<feature type="helix" evidence="10">
    <location>
        <begin position="23"/>
        <end position="30"/>
    </location>
</feature>
<feature type="helix" evidence="10">
    <location>
        <begin position="33"/>
        <end position="44"/>
    </location>
</feature>
<feature type="strand" evidence="10">
    <location>
        <begin position="47"/>
        <end position="57"/>
    </location>
</feature>
<feature type="strand" evidence="10">
    <location>
        <begin position="59"/>
        <end position="70"/>
    </location>
</feature>
<feature type="strand" evidence="10">
    <location>
        <begin position="73"/>
        <end position="82"/>
    </location>
</feature>
<feature type="helix" evidence="10">
    <location>
        <begin position="93"/>
        <end position="95"/>
    </location>
</feature>
<feature type="turn" evidence="10">
    <location>
        <begin position="96"/>
        <end position="98"/>
    </location>
</feature>
<feature type="helix" evidence="9">
    <location>
        <begin position="104"/>
        <end position="106"/>
    </location>
</feature>
<feature type="helix" evidence="10">
    <location>
        <begin position="110"/>
        <end position="129"/>
    </location>
</feature>
<feature type="strand" evidence="10">
    <location>
        <begin position="137"/>
        <end position="141"/>
    </location>
</feature>
<feature type="strand" evidence="10">
    <location>
        <begin position="144"/>
        <end position="148"/>
    </location>
</feature>
<feature type="helix" evidence="10">
    <location>
        <begin position="160"/>
        <end position="163"/>
    </location>
</feature>
<feature type="helix" evidence="10">
    <location>
        <begin position="164"/>
        <end position="169"/>
    </location>
</feature>
<feature type="helix" evidence="10">
    <location>
        <begin position="172"/>
        <end position="188"/>
    </location>
</feature>
<feature type="strand" evidence="9">
    <location>
        <begin position="192"/>
        <end position="194"/>
    </location>
</feature>
<feature type="strand" evidence="10">
    <location>
        <begin position="201"/>
        <end position="210"/>
    </location>
</feature>
<feature type="helix" evidence="9">
    <location>
        <begin position="213"/>
        <end position="215"/>
    </location>
</feature>
<feature type="strand" evidence="9">
    <location>
        <begin position="216"/>
        <end position="218"/>
    </location>
</feature>
<feature type="helix" evidence="10">
    <location>
        <begin position="224"/>
        <end position="240"/>
    </location>
</feature>
<feature type="turn" evidence="10">
    <location>
        <begin position="241"/>
        <end position="243"/>
    </location>
</feature>
<feature type="helix" evidence="10">
    <location>
        <begin position="248"/>
        <end position="256"/>
    </location>
</feature>
<dbReference type="EC" id="2.7.11.1"/>
<dbReference type="EMBL" id="AE000782">
    <property type="protein sequence ID" value="AAB89445.1"/>
    <property type="molecule type" value="Genomic_DNA"/>
</dbReference>
<dbReference type="PIR" id="C69475">
    <property type="entry name" value="C69475"/>
</dbReference>
<dbReference type="RefSeq" id="WP_010879299.1">
    <property type="nucleotide sequence ID" value="NC_000917.1"/>
</dbReference>
<dbReference type="PDB" id="1ZP9">
    <property type="method" value="X-ray"/>
    <property type="resolution" value="2.00 A"/>
    <property type="chains" value="A/B/C/D=1-258"/>
</dbReference>
<dbReference type="PDB" id="1ZTF">
    <property type="method" value="X-ray"/>
    <property type="resolution" value="1.99 A"/>
    <property type="chains" value="A=1-258"/>
</dbReference>
<dbReference type="PDB" id="1ZTH">
    <property type="method" value="X-ray"/>
    <property type="resolution" value="1.89 A"/>
    <property type="chains" value="A/B/C/D=1-258"/>
</dbReference>
<dbReference type="PDB" id="3RE4">
    <property type="method" value="X-ray"/>
    <property type="resolution" value="2.00 A"/>
    <property type="chains" value="A/B=1-258"/>
</dbReference>
<dbReference type="PDB" id="4JIN">
    <property type="method" value="X-ray"/>
    <property type="resolution" value="2.10 A"/>
    <property type="chains" value="A=1-258"/>
</dbReference>
<dbReference type="PDBsum" id="1ZP9"/>
<dbReference type="PDBsum" id="1ZTF"/>
<dbReference type="PDBsum" id="1ZTH"/>
<dbReference type="PDBsum" id="3RE4"/>
<dbReference type="PDBsum" id="4JIN"/>
<dbReference type="SMR" id="O28471"/>
<dbReference type="STRING" id="224325.AF_1804"/>
<dbReference type="iPTMnet" id="O28471"/>
<dbReference type="PaxDb" id="224325-AF_1804"/>
<dbReference type="EnsemblBacteria" id="AAB89445">
    <property type="protein sequence ID" value="AAB89445"/>
    <property type="gene ID" value="AF_1804"/>
</dbReference>
<dbReference type="GeneID" id="24795547"/>
<dbReference type="KEGG" id="afu:AF_1804"/>
<dbReference type="eggNOG" id="arCOG01180">
    <property type="taxonomic scope" value="Archaea"/>
</dbReference>
<dbReference type="HOGENOM" id="CLU_018693_3_3_2"/>
<dbReference type="OrthoDB" id="31344at2157"/>
<dbReference type="PhylomeDB" id="O28471"/>
<dbReference type="BRENDA" id="2.7.11.1">
    <property type="organism ID" value="414"/>
</dbReference>
<dbReference type="EvolutionaryTrace" id="O28471"/>
<dbReference type="PRO" id="PR:O28471"/>
<dbReference type="Proteomes" id="UP000002199">
    <property type="component" value="Chromosome"/>
</dbReference>
<dbReference type="GO" id="GO:0005524">
    <property type="term" value="F:ATP binding"/>
    <property type="evidence" value="ECO:0007669"/>
    <property type="project" value="UniProtKB-KW"/>
</dbReference>
<dbReference type="GO" id="GO:0016787">
    <property type="term" value="F:hydrolase activity"/>
    <property type="evidence" value="ECO:0007669"/>
    <property type="project" value="UniProtKB-KW"/>
</dbReference>
<dbReference type="GO" id="GO:0046872">
    <property type="term" value="F:metal ion binding"/>
    <property type="evidence" value="ECO:0007669"/>
    <property type="project" value="UniProtKB-KW"/>
</dbReference>
<dbReference type="GO" id="GO:0106310">
    <property type="term" value="F:protein serine kinase activity"/>
    <property type="evidence" value="ECO:0007669"/>
    <property type="project" value="RHEA"/>
</dbReference>
<dbReference type="GO" id="GO:0004674">
    <property type="term" value="F:protein serine/threonine kinase activity"/>
    <property type="evidence" value="ECO:0007669"/>
    <property type="project" value="UniProtKB-KW"/>
</dbReference>
<dbReference type="CDD" id="cd05119">
    <property type="entry name" value="RIO"/>
    <property type="match status" value="1"/>
</dbReference>
<dbReference type="Gene3D" id="3.30.200.20">
    <property type="entry name" value="Phosphorylase Kinase, domain 1"/>
    <property type="match status" value="1"/>
</dbReference>
<dbReference type="Gene3D" id="1.10.510.10">
    <property type="entry name" value="Transferase(Phosphotransferase) domain 1"/>
    <property type="match status" value="1"/>
</dbReference>
<dbReference type="InterPro" id="IPR011009">
    <property type="entry name" value="Kinase-like_dom_sf"/>
</dbReference>
<dbReference type="InterPro" id="IPR000719">
    <property type="entry name" value="Prot_kinase_dom"/>
</dbReference>
<dbReference type="InterPro" id="IPR051272">
    <property type="entry name" value="RIO-type_Ser/Thr_kinase"/>
</dbReference>
<dbReference type="InterPro" id="IPR018934">
    <property type="entry name" value="RIO_dom"/>
</dbReference>
<dbReference type="InterPro" id="IPR000687">
    <property type="entry name" value="RIO_kinase"/>
</dbReference>
<dbReference type="InterPro" id="IPR018935">
    <property type="entry name" value="RIO_kinase_CS"/>
</dbReference>
<dbReference type="PANTHER" id="PTHR45723">
    <property type="entry name" value="SERINE/THREONINE-PROTEIN KINASE RIO1"/>
    <property type="match status" value="1"/>
</dbReference>
<dbReference type="Pfam" id="PF01163">
    <property type="entry name" value="RIO1"/>
    <property type="match status" value="1"/>
</dbReference>
<dbReference type="SMART" id="SM00090">
    <property type="entry name" value="RIO"/>
    <property type="match status" value="1"/>
</dbReference>
<dbReference type="SUPFAM" id="SSF56112">
    <property type="entry name" value="Protein kinase-like (PK-like)"/>
    <property type="match status" value="1"/>
</dbReference>
<dbReference type="PROSITE" id="PS50011">
    <property type="entry name" value="PROTEIN_KINASE_DOM"/>
    <property type="match status" value="1"/>
</dbReference>
<dbReference type="PROSITE" id="PS01245">
    <property type="entry name" value="RIO1"/>
    <property type="match status" value="1"/>
</dbReference>
<keyword id="KW-0002">3D-structure</keyword>
<keyword id="KW-0067">ATP-binding</keyword>
<keyword id="KW-0903">Direct protein sequencing</keyword>
<keyword id="KW-0378">Hydrolase</keyword>
<keyword id="KW-0418">Kinase</keyword>
<keyword id="KW-0460">Magnesium</keyword>
<keyword id="KW-0479">Metal-binding</keyword>
<keyword id="KW-0547">Nucleotide-binding</keyword>
<keyword id="KW-0597">Phosphoprotein</keyword>
<keyword id="KW-1185">Reference proteome</keyword>
<keyword id="KW-0723">Serine/threonine-protein kinase</keyword>
<keyword id="KW-0808">Transferase</keyword>
<organism>
    <name type="scientific">Archaeoglobus fulgidus (strain ATCC 49558 / DSM 4304 / JCM 9628 / NBRC 100126 / VC-16)</name>
    <dbReference type="NCBI Taxonomy" id="224325"/>
    <lineage>
        <taxon>Archaea</taxon>
        <taxon>Methanobacteriati</taxon>
        <taxon>Methanobacteriota</taxon>
        <taxon>Archaeoglobi</taxon>
        <taxon>Archaeoglobales</taxon>
        <taxon>Archaeoglobaceae</taxon>
        <taxon>Archaeoglobus</taxon>
    </lineage>
</organism>